<name>MTP_MEGAM</name>
<gene>
    <name evidence="5" type="primary">MTTP</name>
</gene>
<keyword id="KW-1015">Disulfide bond</keyword>
<keyword id="KW-0256">Endoplasmic reticulum</keyword>
<keyword id="KW-0445">Lipid transport</keyword>
<keyword id="KW-0732">Signal</keyword>
<keyword id="KW-0813">Transport</keyword>
<accession>A0A0N6WHT4</accession>
<sequence>MLRLAGLLLCVTSFLSTSSLGANAGPRLDNDRLYRYSYSAELGLNRPTGSTRGNPGFRISSDVDISLVWRNPEIQDEQLLQVQISNVQVESAGKHSRKNNIFHGSSTESILGKVRLEALQRPFMVLWKMGKIRSLYAHKGEPATIKNLKRGVASMLMMQLKSGKMMEADSSGKCLVEYKATKHQVIRTKHLDTCKTQEKGFTTYSPVLGVSGKSASETVITLENGIIKSADVEETHILSINARHTAATKVLSRQSLTLKKIEVGPTEVAGKDVAGVVKSLDDKFMSVGVIVEKVKAKCKGCPNLMDTWKAVRSKLEPDSLSKAEAPRSFLTLLHSLRKASKAEILTVLRNCSKTALPQLVDAVTSAQTTSSLSAILEFLDFSKKEGLVLQERFLYACGFASHPTETMLQSLLDVSQGKIGSPDIKESVVIIMGALLRKLCLKGACELPTVVKVKELLLAGPDSTQVESEVQMYLLALKNALLPEAVPLLAKYAESEVGAYSTIAITALQRYDPVLITPEVKKTVNRIYHQNQRIYEKNVRAAAADVIMSSSPSYMEVKNVLLSIGHLPHEMNKYMLSKVQDILRFEMPACKLVQQVMKDMISHNYDRFSKTGSSSAFSGFMAQTADVISTYNLDILYSGSGVLRRSNMNIYGQSNNALLHGLQVTIEAQGLESLIAATADEGEEELESFAGMSALLFDVQLRPVTFFKGYSDLMSKMFSMSGDPINVVKGLILLTDHSQVIPLQSGLRASAEFQGGLAIDISGGMEFSLWYRESKTSVNNRGALVVIGNVTVDMDFVSAGVEVGFETEASLDFITTVQFSEYPFLVCMQMDKTTFPFREMVSKQEKLPSGQTFSTKRSRDQLVPGSEFPLHQENSNMCKKVFEQAW</sequence>
<protein>
    <recommendedName>
        <fullName evidence="5 6">Microsomal triglyceride transfer protein</fullName>
    </recommendedName>
</protein>
<feature type="signal peptide" evidence="2">
    <location>
        <begin position="1"/>
        <end position="24"/>
    </location>
</feature>
<feature type="chain" id="PRO_5006009902" description="Microsomal triglyceride transfer protein" evidence="2">
    <location>
        <begin position="25"/>
        <end position="886"/>
    </location>
</feature>
<feature type="domain" description="Vitellogenin" evidence="3">
    <location>
        <begin position="28"/>
        <end position="662"/>
    </location>
</feature>
<feature type="disulfide bond" evidence="3">
    <location>
        <begin position="174"/>
        <end position="194"/>
    </location>
</feature>
<feature type="disulfide bond" evidence="3">
    <location>
        <begin position="440"/>
        <end position="445"/>
    </location>
</feature>
<dbReference type="EMBL" id="KM980090">
    <property type="protein sequence ID" value="AKN79614.1"/>
    <property type="molecule type" value="mRNA"/>
</dbReference>
<dbReference type="SMR" id="A0A0N6WHT4"/>
<dbReference type="GO" id="GO:0016323">
    <property type="term" value="C:basolateral plasma membrane"/>
    <property type="evidence" value="ECO:0007669"/>
    <property type="project" value="TreeGrafter"/>
</dbReference>
<dbReference type="GO" id="GO:0005783">
    <property type="term" value="C:endoplasmic reticulum"/>
    <property type="evidence" value="ECO:0000250"/>
    <property type="project" value="UniProtKB"/>
</dbReference>
<dbReference type="GO" id="GO:0005794">
    <property type="term" value="C:Golgi apparatus"/>
    <property type="evidence" value="ECO:0007669"/>
    <property type="project" value="TreeGrafter"/>
</dbReference>
<dbReference type="GO" id="GO:1902388">
    <property type="term" value="F:ceramide 1-phosphate transfer activity"/>
    <property type="evidence" value="ECO:0000250"/>
    <property type="project" value="UniProtKB"/>
</dbReference>
<dbReference type="GO" id="GO:0008289">
    <property type="term" value="F:lipid binding"/>
    <property type="evidence" value="ECO:0007669"/>
    <property type="project" value="InterPro"/>
</dbReference>
<dbReference type="GO" id="GO:0046982">
    <property type="term" value="F:protein heterodimerization activity"/>
    <property type="evidence" value="ECO:0000250"/>
    <property type="project" value="UniProtKB"/>
</dbReference>
<dbReference type="GO" id="GO:0042632">
    <property type="term" value="P:cholesterol homeostasis"/>
    <property type="evidence" value="ECO:0007669"/>
    <property type="project" value="TreeGrafter"/>
</dbReference>
<dbReference type="GO" id="GO:0042157">
    <property type="term" value="P:lipoprotein metabolic process"/>
    <property type="evidence" value="ECO:0007669"/>
    <property type="project" value="TreeGrafter"/>
</dbReference>
<dbReference type="GO" id="GO:0015914">
    <property type="term" value="P:phospholipid transport"/>
    <property type="evidence" value="ECO:0000250"/>
    <property type="project" value="UniProtKB"/>
</dbReference>
<dbReference type="GO" id="GO:0034377">
    <property type="term" value="P:plasma lipoprotein particle assembly"/>
    <property type="evidence" value="ECO:0000250"/>
    <property type="project" value="UniProtKB"/>
</dbReference>
<dbReference type="GO" id="GO:0034197">
    <property type="term" value="P:triglyceride transport"/>
    <property type="evidence" value="ECO:0000250"/>
    <property type="project" value="UniProtKB"/>
</dbReference>
<dbReference type="FunFam" id="2.30.230.10:FF:000001">
    <property type="entry name" value="Microsomal triglyceride transfer protein large subunit"/>
    <property type="match status" value="1"/>
</dbReference>
<dbReference type="FunFam" id="1.25.10.20:FF:000001">
    <property type="entry name" value="microsomal triglyceride transfer protein large subunit"/>
    <property type="match status" value="1"/>
</dbReference>
<dbReference type="Gene3D" id="2.30.230.10">
    <property type="entry name" value="Lipovitellin, beta-sheet shell regions, chain A"/>
    <property type="match status" value="1"/>
</dbReference>
<dbReference type="Gene3D" id="1.25.10.20">
    <property type="entry name" value="Vitellinogen, superhelical"/>
    <property type="match status" value="1"/>
</dbReference>
<dbReference type="InterPro" id="IPR015819">
    <property type="entry name" value="Lipid_transp_b-sht_shell"/>
</dbReference>
<dbReference type="InterPro" id="IPR011030">
    <property type="entry name" value="Lipovitellin_superhlx_dom"/>
</dbReference>
<dbReference type="InterPro" id="IPR045811">
    <property type="entry name" value="MTP_lip-bd"/>
</dbReference>
<dbReference type="InterPro" id="IPR039988">
    <property type="entry name" value="MTTP"/>
</dbReference>
<dbReference type="InterPro" id="IPR015816">
    <property type="entry name" value="Vitellinogen_b-sht_N"/>
</dbReference>
<dbReference type="InterPro" id="IPR001747">
    <property type="entry name" value="Vitellogenin_N"/>
</dbReference>
<dbReference type="PANTHER" id="PTHR13024:SF1">
    <property type="entry name" value="MICROSOMAL TRIGLYCERIDE TRANSFER PROTEIN LARGE SUBUNIT"/>
    <property type="match status" value="1"/>
</dbReference>
<dbReference type="PANTHER" id="PTHR13024">
    <property type="entry name" value="MICROSOMAL TRIGLYCERIDE TRANSFER PROTEIN, LARGE SUBUNIT"/>
    <property type="match status" value="1"/>
</dbReference>
<dbReference type="Pfam" id="PF19444">
    <property type="entry name" value="MTP_lip_bd"/>
    <property type="match status" value="1"/>
</dbReference>
<dbReference type="Pfam" id="PF01347">
    <property type="entry name" value="Vitellogenin_N"/>
    <property type="match status" value="1"/>
</dbReference>
<dbReference type="SMART" id="SM00638">
    <property type="entry name" value="LPD_N"/>
    <property type="match status" value="1"/>
</dbReference>
<dbReference type="SUPFAM" id="SSF56968">
    <property type="entry name" value="Lipovitellin-phosvitin complex, beta-sheet shell regions"/>
    <property type="match status" value="1"/>
</dbReference>
<dbReference type="SUPFAM" id="SSF48431">
    <property type="entry name" value="Lipovitellin-phosvitin complex, superhelical domain"/>
    <property type="match status" value="1"/>
</dbReference>
<dbReference type="PROSITE" id="PS51211">
    <property type="entry name" value="VITELLOGENIN"/>
    <property type="match status" value="1"/>
</dbReference>
<reference evidence="6" key="1">
    <citation type="journal article" date="2015" name="Comp. Biochem. Physiol.">
        <title>Cloning and characterization of microsomal triglyceride transfer protein gene and its potential connection with peroxisome proliferator-activated receptor (PPAR) in blunt snout bream (Megalobrama amblycephala).</title>
        <authorList>
            <person name="Li J.Y."/>
            <person name="Zhang D.D."/>
            <person name="Jiang G.Z."/>
            <person name="Li X.F."/>
            <person name="Zhang C.N."/>
            <person name="Zhou M."/>
            <person name="Liu W.B."/>
            <person name="Xu W.N."/>
        </authorList>
    </citation>
    <scope>NUCLEOTIDE SEQUENCE [MRNA]</scope>
    <scope>DEVELOPMENTAL STAGE</scope>
    <scope>INDUCTION</scope>
    <scope>PHYLOGENETIC ANALYSIS</scope>
    <source>
        <tissue evidence="5 6">Liver</tissue>
    </source>
</reference>
<evidence type="ECO:0000250" key="1">
    <source>
        <dbReference type="UniProtKB" id="P55157"/>
    </source>
</evidence>
<evidence type="ECO:0000255" key="2"/>
<evidence type="ECO:0000255" key="3">
    <source>
        <dbReference type="PROSITE-ProRule" id="PRU00557"/>
    </source>
</evidence>
<evidence type="ECO:0000269" key="4">
    <source>
    </source>
</evidence>
<evidence type="ECO:0000303" key="5">
    <source>
    </source>
</evidence>
<evidence type="ECO:0000312" key="6">
    <source>
        <dbReference type="EMBL" id="AKN79614.1"/>
    </source>
</evidence>
<proteinExistence type="evidence at transcript level"/>
<organism evidence="6">
    <name type="scientific">Megalobrama amblycephala</name>
    <name type="common">Chinese blunt snout bream</name>
    <name type="synonym">Brema carp</name>
    <dbReference type="NCBI Taxonomy" id="75352"/>
    <lineage>
        <taxon>Eukaryota</taxon>
        <taxon>Metazoa</taxon>
        <taxon>Chordata</taxon>
        <taxon>Craniata</taxon>
        <taxon>Vertebrata</taxon>
        <taxon>Euteleostomi</taxon>
        <taxon>Actinopterygii</taxon>
        <taxon>Neopterygii</taxon>
        <taxon>Teleostei</taxon>
        <taxon>Ostariophysi</taxon>
        <taxon>Cypriniformes</taxon>
        <taxon>Xenocyprididae</taxon>
        <taxon>Xenocypridinae</taxon>
        <taxon>Megalobrama</taxon>
    </lineage>
</organism>
<comment type="function">
    <text evidence="1">Catalyzes the transport of triglyceride, cholesteryl ester, and phospholipid between phospholipid surfaces. Required for the secretion of plasma lipoproteins that contain apolipoprotein B.</text>
</comment>
<comment type="subunit">
    <text evidence="1">Heterodimer; heterodimerizes with the protein disulfide isomerase. Interacts with apolipoprotein B.</text>
</comment>
<comment type="subcellular location">
    <subcellularLocation>
        <location evidence="1">Endoplasmic reticulum</location>
    </subcellularLocation>
</comment>
<comment type="developmental stage">
    <text evidence="4">In juvenile fish, high level of expression in liver, intestine, kidney and muscle, and very low levels in heart, spleen and gill.</text>
</comment>
<comment type="induction">
    <text evidence="4">By elevated dietary lipid levels in the intestine of the juvenile fish.</text>
</comment>